<accession>Q1LSL6</accession>
<gene>
    <name evidence="1" type="primary">ribB</name>
    <name type="ordered locus">BCI_0623</name>
</gene>
<organism>
    <name type="scientific">Baumannia cicadellinicola subsp. Homalodisca coagulata</name>
    <dbReference type="NCBI Taxonomy" id="374463"/>
    <lineage>
        <taxon>Bacteria</taxon>
        <taxon>Pseudomonadati</taxon>
        <taxon>Pseudomonadota</taxon>
        <taxon>Gammaproteobacteria</taxon>
        <taxon>Candidatus Palibaumannia</taxon>
    </lineage>
</organism>
<dbReference type="EC" id="4.1.99.12" evidence="1"/>
<dbReference type="EMBL" id="CP000238">
    <property type="protein sequence ID" value="ABF14246.1"/>
    <property type="molecule type" value="Genomic_DNA"/>
</dbReference>
<dbReference type="RefSeq" id="WP_011520781.1">
    <property type="nucleotide sequence ID" value="NC_007984.1"/>
</dbReference>
<dbReference type="SMR" id="Q1LSL6"/>
<dbReference type="STRING" id="374463.BCI_0623"/>
<dbReference type="KEGG" id="bci:BCI_0623"/>
<dbReference type="HOGENOM" id="CLU_020273_3_0_6"/>
<dbReference type="OrthoDB" id="9793111at2"/>
<dbReference type="UniPathway" id="UPA00275">
    <property type="reaction ID" value="UER00399"/>
</dbReference>
<dbReference type="Proteomes" id="UP000002427">
    <property type="component" value="Chromosome"/>
</dbReference>
<dbReference type="GO" id="GO:0005829">
    <property type="term" value="C:cytosol"/>
    <property type="evidence" value="ECO:0007669"/>
    <property type="project" value="TreeGrafter"/>
</dbReference>
<dbReference type="GO" id="GO:0008686">
    <property type="term" value="F:3,4-dihydroxy-2-butanone-4-phosphate synthase activity"/>
    <property type="evidence" value="ECO:0007669"/>
    <property type="project" value="UniProtKB-UniRule"/>
</dbReference>
<dbReference type="GO" id="GO:0000287">
    <property type="term" value="F:magnesium ion binding"/>
    <property type="evidence" value="ECO:0007669"/>
    <property type="project" value="UniProtKB-UniRule"/>
</dbReference>
<dbReference type="GO" id="GO:0030145">
    <property type="term" value="F:manganese ion binding"/>
    <property type="evidence" value="ECO:0007669"/>
    <property type="project" value="UniProtKB-UniRule"/>
</dbReference>
<dbReference type="GO" id="GO:0009231">
    <property type="term" value="P:riboflavin biosynthetic process"/>
    <property type="evidence" value="ECO:0007669"/>
    <property type="project" value="UniProtKB-UniRule"/>
</dbReference>
<dbReference type="FunFam" id="3.90.870.10:FF:000002">
    <property type="entry name" value="3,4-dihydroxy-2-butanone 4-phosphate synthase"/>
    <property type="match status" value="1"/>
</dbReference>
<dbReference type="Gene3D" id="3.90.870.10">
    <property type="entry name" value="DHBP synthase"/>
    <property type="match status" value="1"/>
</dbReference>
<dbReference type="HAMAP" id="MF_00180">
    <property type="entry name" value="RibB"/>
    <property type="match status" value="1"/>
</dbReference>
<dbReference type="InterPro" id="IPR017945">
    <property type="entry name" value="DHBP_synth_RibB-like_a/b_dom"/>
</dbReference>
<dbReference type="InterPro" id="IPR000422">
    <property type="entry name" value="DHBP_synthase_RibB"/>
</dbReference>
<dbReference type="NCBIfam" id="TIGR00506">
    <property type="entry name" value="ribB"/>
    <property type="match status" value="1"/>
</dbReference>
<dbReference type="PANTHER" id="PTHR21327:SF38">
    <property type="entry name" value="3,4-DIHYDROXY-2-BUTANONE 4-PHOSPHATE SYNTHASE"/>
    <property type="match status" value="1"/>
</dbReference>
<dbReference type="PANTHER" id="PTHR21327">
    <property type="entry name" value="GTP CYCLOHYDROLASE II-RELATED"/>
    <property type="match status" value="1"/>
</dbReference>
<dbReference type="Pfam" id="PF00926">
    <property type="entry name" value="DHBP_synthase"/>
    <property type="match status" value="1"/>
</dbReference>
<dbReference type="SUPFAM" id="SSF55821">
    <property type="entry name" value="YrdC/RibB"/>
    <property type="match status" value="1"/>
</dbReference>
<proteinExistence type="inferred from homology"/>
<evidence type="ECO:0000255" key="1">
    <source>
        <dbReference type="HAMAP-Rule" id="MF_00180"/>
    </source>
</evidence>
<reference key="1">
    <citation type="journal article" date="2006" name="PLoS Biol.">
        <title>Metabolic complementarity and genomics of the dual bacterial symbiosis of sharpshooters.</title>
        <authorList>
            <person name="Wu D."/>
            <person name="Daugherty S.C."/>
            <person name="Van Aken S.E."/>
            <person name="Pai G.H."/>
            <person name="Watkins K.L."/>
            <person name="Khouri H."/>
            <person name="Tallon L.J."/>
            <person name="Zaborsky J.M."/>
            <person name="Dunbar H.E."/>
            <person name="Tran P.L."/>
            <person name="Moran N.A."/>
            <person name="Eisen J.A."/>
        </authorList>
    </citation>
    <scope>NUCLEOTIDE SEQUENCE [LARGE SCALE GENOMIC DNA]</scope>
</reference>
<feature type="chain" id="PRO_1000040596" description="3,4-dihydroxy-2-butanone 4-phosphate synthase">
    <location>
        <begin position="1"/>
        <end position="211"/>
    </location>
</feature>
<feature type="binding site" evidence="1">
    <location>
        <begin position="37"/>
        <end position="38"/>
    </location>
    <ligand>
        <name>D-ribulose 5-phosphate</name>
        <dbReference type="ChEBI" id="CHEBI:58121"/>
    </ligand>
</feature>
<feature type="binding site" evidence="1">
    <location>
        <position position="38"/>
    </location>
    <ligand>
        <name>Mg(2+)</name>
        <dbReference type="ChEBI" id="CHEBI:18420"/>
        <label>1</label>
    </ligand>
</feature>
<feature type="binding site" evidence="1">
    <location>
        <position position="38"/>
    </location>
    <ligand>
        <name>Mg(2+)</name>
        <dbReference type="ChEBI" id="CHEBI:18420"/>
        <label>2</label>
    </ligand>
</feature>
<feature type="binding site" evidence="1">
    <location>
        <position position="42"/>
    </location>
    <ligand>
        <name>D-ribulose 5-phosphate</name>
        <dbReference type="ChEBI" id="CHEBI:58121"/>
    </ligand>
</feature>
<feature type="binding site" evidence="1">
    <location>
        <begin position="150"/>
        <end position="154"/>
    </location>
    <ligand>
        <name>D-ribulose 5-phosphate</name>
        <dbReference type="ChEBI" id="CHEBI:58121"/>
    </ligand>
</feature>
<feature type="binding site" evidence="1">
    <location>
        <position position="153"/>
    </location>
    <ligand>
        <name>Mg(2+)</name>
        <dbReference type="ChEBI" id="CHEBI:18420"/>
        <label>2</label>
    </ligand>
</feature>
<feature type="binding site" evidence="1">
    <location>
        <position position="174"/>
    </location>
    <ligand>
        <name>D-ribulose 5-phosphate</name>
        <dbReference type="ChEBI" id="CHEBI:58121"/>
    </ligand>
</feature>
<feature type="site" description="Essential for catalytic activity" evidence="1">
    <location>
        <position position="136"/>
    </location>
</feature>
<feature type="site" description="Essential for catalytic activity" evidence="1">
    <location>
        <position position="174"/>
    </location>
</feature>
<sequence length="211" mass="23094">MNQIIFSQFGTPIERVEIALQALRHGRGVLVLDNEDRENEGDMIFAAEKMTIEQMALAIRYGSGIICLCLTEERRQQLELPMMVEHNTSHYQTAFTVTIEAAEGVTTGVSAADRITTIRTAIKNDAIPEDLNRPGHVFPLLAQPGGVLNRGGHTEAAIDLTLLAGLKPAGVLCEVTNEDGSMARALEIIAFSNQHNMPVLTINDLVAYRSR</sequence>
<name>RIBB_BAUCH</name>
<comment type="function">
    <text evidence="1">Catalyzes the conversion of D-ribulose 5-phosphate to formate and 3,4-dihydroxy-2-butanone 4-phosphate.</text>
</comment>
<comment type="catalytic activity">
    <reaction evidence="1">
        <text>D-ribulose 5-phosphate = (2S)-2-hydroxy-3-oxobutyl phosphate + formate + H(+)</text>
        <dbReference type="Rhea" id="RHEA:18457"/>
        <dbReference type="ChEBI" id="CHEBI:15378"/>
        <dbReference type="ChEBI" id="CHEBI:15740"/>
        <dbReference type="ChEBI" id="CHEBI:58121"/>
        <dbReference type="ChEBI" id="CHEBI:58830"/>
        <dbReference type="EC" id="4.1.99.12"/>
    </reaction>
</comment>
<comment type="cofactor">
    <cofactor evidence="1">
        <name>Mg(2+)</name>
        <dbReference type="ChEBI" id="CHEBI:18420"/>
    </cofactor>
    <cofactor evidence="1">
        <name>Mn(2+)</name>
        <dbReference type="ChEBI" id="CHEBI:29035"/>
    </cofactor>
    <text evidence="1">Binds 2 divalent metal cations per subunit. Magnesium or manganese.</text>
</comment>
<comment type="pathway">
    <text evidence="1">Cofactor biosynthesis; riboflavin biosynthesis; 2-hydroxy-3-oxobutyl phosphate from D-ribulose 5-phosphate: step 1/1.</text>
</comment>
<comment type="subunit">
    <text evidence="1">Homodimer.</text>
</comment>
<comment type="similarity">
    <text evidence="1">Belongs to the DHBP synthase family.</text>
</comment>
<keyword id="KW-0456">Lyase</keyword>
<keyword id="KW-0460">Magnesium</keyword>
<keyword id="KW-0464">Manganese</keyword>
<keyword id="KW-0479">Metal-binding</keyword>
<keyword id="KW-1185">Reference proteome</keyword>
<keyword id="KW-0686">Riboflavin biosynthesis</keyword>
<protein>
    <recommendedName>
        <fullName evidence="1">3,4-dihydroxy-2-butanone 4-phosphate synthase</fullName>
        <shortName evidence="1">DHBP synthase</shortName>
        <ecNumber evidence="1">4.1.99.12</ecNumber>
    </recommendedName>
</protein>